<sequence length="200" mass="22208">MSQHELPSLPYDYDALEPHISEQVVTWHHDTHHQSYVDGLNSAEETLAENRETGDHASTAGALGDVTHNGCGHYLHTMFWEHMSPDGGGEPSGALADRIAADFGSYENWRAEFEVAAGAASGWALLVYDPVAKQLRNVAVDNHDEGALWGSHPILALDVWEHSYYYDYGPDRGSFVDAFFEVIDWDPIAANYDDVVSLFE</sequence>
<keyword id="KW-0464">Manganese</keyword>
<keyword id="KW-0479">Metal-binding</keyword>
<keyword id="KW-0560">Oxidoreductase</keyword>
<keyword id="KW-1185">Reference proteome</keyword>
<organism>
    <name type="scientific">Halobacterium salinarum (strain ATCC 700922 / JCM 11081 / NRC-1)</name>
    <name type="common">Halobacterium halobium</name>
    <dbReference type="NCBI Taxonomy" id="64091"/>
    <lineage>
        <taxon>Archaea</taxon>
        <taxon>Methanobacteriati</taxon>
        <taxon>Methanobacteriota</taxon>
        <taxon>Stenosarchaea group</taxon>
        <taxon>Halobacteria</taxon>
        <taxon>Halobacteriales</taxon>
        <taxon>Halobacteriaceae</taxon>
        <taxon>Halobacterium</taxon>
        <taxon>Halobacterium salinarum NRC-34001</taxon>
    </lineage>
</organism>
<accession>P09224</accession>
<accession>Q03299</accession>
<accession>Q9HQ47</accession>
<proteinExistence type="inferred from homology"/>
<feature type="chain" id="PRO_0000160115" description="Superoxide dismutase [Mn] 2">
    <location>
        <begin position="1"/>
        <end position="200"/>
    </location>
</feature>
<feature type="binding site" evidence="1">
    <location>
        <position position="28"/>
    </location>
    <ligand>
        <name>Mn(2+)</name>
        <dbReference type="ChEBI" id="CHEBI:29035"/>
    </ligand>
</feature>
<feature type="binding site" evidence="1">
    <location>
        <position position="76"/>
    </location>
    <ligand>
        <name>Mn(2+)</name>
        <dbReference type="ChEBI" id="CHEBI:29035"/>
    </ligand>
</feature>
<feature type="binding site" evidence="1">
    <location>
        <position position="158"/>
    </location>
    <ligand>
        <name>Mn(2+)</name>
        <dbReference type="ChEBI" id="CHEBI:29035"/>
    </ligand>
</feature>
<feature type="binding site" evidence="1">
    <location>
        <position position="162"/>
    </location>
    <ligand>
        <name>Mn(2+)</name>
        <dbReference type="ChEBI" id="CHEBI:29035"/>
    </ligand>
</feature>
<feature type="sequence conflict" description="In Ref. 5; AAA73372." evidence="2" ref="5">
    <original>V</original>
    <variation>A</variation>
    <location>
        <position position="24"/>
    </location>
</feature>
<feature type="sequence conflict" description="In Ref. 5; AAA73372." evidence="2" ref="5">
    <original>T</original>
    <variation>N</variation>
    <location>
        <position position="46"/>
    </location>
</feature>
<feature type="sequence conflict" description="In Ref. 5; AAA73372." evidence="2" ref="5">
    <original>E</original>
    <variation>G</variation>
    <location>
        <position position="49"/>
    </location>
</feature>
<feature type="sequence conflict" description="In Ref. 1; AAA72704." evidence="2" ref="1">
    <original>S</original>
    <variation>T</variation>
    <location>
        <position position="174"/>
    </location>
</feature>
<evidence type="ECO:0000250" key="1"/>
<evidence type="ECO:0000305" key="2"/>
<name>SODM2_HALSA</name>
<reference key="1">
    <citation type="journal article" date="1988" name="Gene">
        <title>Cloning and determination of the nucleotide sequence of the Mn-containing superoxide dismutase gene from Halobacterium halobium.</title>
        <authorList>
            <person name="Salin M.L."/>
            <person name="Duke M.V."/>
            <person name="Oesterhelt D."/>
            <person name="Ma D.-P."/>
        </authorList>
    </citation>
    <scope>NUCLEOTIDE SEQUENCE [GENOMIC DNA]</scope>
</reference>
<reference key="2">
    <citation type="journal article" date="1990" name="Gene">
        <authorList>
            <person name="Salin M.L."/>
            <person name="Duke M.V."/>
            <person name="Oesterhelt D."/>
            <person name="Ma D.-P."/>
        </authorList>
    </citation>
    <scope>ERRATUM OF PUBMED:3240866</scope>
</reference>
<reference key="3">
    <citation type="journal article" date="1989" name="J. Bacteriol.">
        <title>Tandem arrangement of photolyase and superoxide dismutase genes in Halobacterium halobium.</title>
        <authorList>
            <person name="Takao M."/>
            <person name="Kobayashi T."/>
            <person name="Oikawa A."/>
            <person name="Yasui A."/>
        </authorList>
    </citation>
    <scope>NUCLEOTIDE SEQUENCE [GENOMIC DNA]</scope>
</reference>
<reference key="4">
    <citation type="journal article" date="1990" name="J. Bacteriol.">
        <title>Unusual evolution of a superoxide dismutase-like gene from the extremely halophilic archaebacterium Halobacterium cutirubrum.</title>
        <authorList>
            <person name="May B.P."/>
            <person name="Dennis P.P."/>
        </authorList>
    </citation>
    <scope>NUCLEOTIDE SEQUENCE [GENOMIC DNA]</scope>
</reference>
<reference key="5">
    <citation type="journal article" date="1993" name="J. Bacteriol.">
        <title>Characterization of paralogous and orthologous members of the superoxide dismutase gene family from genera of the halophilic archaebacteria.</title>
        <authorList>
            <person name="Joshi P.B."/>
            <person name="Dennis P.P."/>
        </authorList>
    </citation>
    <scope>NUCLEOTIDE SEQUENCE [GENOMIC DNA]</scope>
    <source>
        <strain>GRB</strain>
    </source>
</reference>
<reference key="6">
    <citation type="journal article" date="2000" name="Proc. Natl. Acad. Sci. U.S.A.">
        <title>Genome sequence of Halobacterium species NRC-1.</title>
        <authorList>
            <person name="Ng W.V."/>
            <person name="Kennedy S.P."/>
            <person name="Mahairas G.G."/>
            <person name="Berquist B."/>
            <person name="Pan M."/>
            <person name="Shukla H.D."/>
            <person name="Lasky S.R."/>
            <person name="Baliga N.S."/>
            <person name="Thorsson V."/>
            <person name="Sbrogna J."/>
            <person name="Swartzell S."/>
            <person name="Weir D."/>
            <person name="Hall J."/>
            <person name="Dahl T.A."/>
            <person name="Welti R."/>
            <person name="Goo Y.A."/>
            <person name="Leithauser B."/>
            <person name="Keller K."/>
            <person name="Cruz R."/>
            <person name="Danson M.J."/>
            <person name="Hough D.W."/>
            <person name="Maddocks D.G."/>
            <person name="Jablonski P.E."/>
            <person name="Krebs M.P."/>
            <person name="Angevine C.M."/>
            <person name="Dale H."/>
            <person name="Isenbarger T.A."/>
            <person name="Peck R.F."/>
            <person name="Pohlschroder M."/>
            <person name="Spudich J.L."/>
            <person name="Jung K.-H."/>
            <person name="Alam M."/>
            <person name="Freitas T."/>
            <person name="Hou S."/>
            <person name="Daniels C.J."/>
            <person name="Dennis P.P."/>
            <person name="Omer A.D."/>
            <person name="Ebhardt H."/>
            <person name="Lowe T.M."/>
            <person name="Liang P."/>
            <person name="Riley M."/>
            <person name="Hood L."/>
            <person name="DasSarma S."/>
        </authorList>
    </citation>
    <scope>NUCLEOTIDE SEQUENCE [LARGE SCALE GENOMIC DNA]</scope>
    <source>
        <strain>ATCC 700922 / JCM 11081 / NRC-1</strain>
    </source>
</reference>
<protein>
    <recommendedName>
        <fullName>Superoxide dismutase [Mn] 2</fullName>
        <ecNumber>1.15.1.1</ecNumber>
    </recommendedName>
</protein>
<gene>
    <name type="primary">sod2</name>
    <name type="synonym">slg</name>
    <name type="synonym">sod1</name>
    <name type="ordered locus">VNG_1332G</name>
</gene>
<dbReference type="EC" id="1.15.1.1"/>
<dbReference type="EMBL" id="M22408">
    <property type="protein sequence ID" value="AAA72704.1"/>
    <property type="molecule type" value="Genomic_DNA"/>
</dbReference>
<dbReference type="EMBL" id="M24544">
    <property type="protein sequence ID" value="AAA72750.1"/>
    <property type="molecule type" value="Genomic_DNA"/>
</dbReference>
<dbReference type="EMBL" id="M26502">
    <property type="protein sequence ID" value="AAA72770.1"/>
    <property type="molecule type" value="Genomic_DNA"/>
</dbReference>
<dbReference type="EMBL" id="M97483">
    <property type="protein sequence ID" value="AAA73372.1"/>
    <property type="molecule type" value="Genomic_DNA"/>
</dbReference>
<dbReference type="EMBL" id="AE004437">
    <property type="protein sequence ID" value="AAG19670.1"/>
    <property type="molecule type" value="Genomic_DNA"/>
</dbReference>
<dbReference type="PIR" id="B84288">
    <property type="entry name" value="B84288"/>
</dbReference>
<dbReference type="PIR" id="C32580">
    <property type="entry name" value="DSHSNH"/>
</dbReference>
<dbReference type="PIR" id="T50047">
    <property type="entry name" value="T50047"/>
</dbReference>
<dbReference type="SMR" id="P09224"/>
<dbReference type="STRING" id="64091.VNG_1332G"/>
<dbReference type="PaxDb" id="64091-VNG_1332G"/>
<dbReference type="KEGG" id="hal:VNG_1332G"/>
<dbReference type="PATRIC" id="fig|64091.14.peg.1018"/>
<dbReference type="HOGENOM" id="CLU_031625_2_1_2"/>
<dbReference type="InParanoid" id="P09224"/>
<dbReference type="OrthoDB" id="32917at2157"/>
<dbReference type="PhylomeDB" id="P09224"/>
<dbReference type="Proteomes" id="UP000000554">
    <property type="component" value="Chromosome"/>
</dbReference>
<dbReference type="GO" id="GO:0005737">
    <property type="term" value="C:cytoplasm"/>
    <property type="evidence" value="ECO:0000318"/>
    <property type="project" value="GO_Central"/>
</dbReference>
<dbReference type="GO" id="GO:0046872">
    <property type="term" value="F:metal ion binding"/>
    <property type="evidence" value="ECO:0007669"/>
    <property type="project" value="UniProtKB-KW"/>
</dbReference>
<dbReference type="GO" id="GO:0004784">
    <property type="term" value="F:superoxide dismutase activity"/>
    <property type="evidence" value="ECO:0007669"/>
    <property type="project" value="UniProtKB-EC"/>
</dbReference>
<dbReference type="FunFam" id="3.55.40.20:FF:000004">
    <property type="entry name" value="Superoxide dismutase [Fe]"/>
    <property type="match status" value="1"/>
</dbReference>
<dbReference type="Gene3D" id="1.10.287.990">
    <property type="entry name" value="Fe,Mn superoxide dismutase (SOD) domain"/>
    <property type="match status" value="1"/>
</dbReference>
<dbReference type="Gene3D" id="3.55.40.20">
    <property type="entry name" value="Iron/manganese superoxide dismutase, C-terminal domain"/>
    <property type="match status" value="1"/>
</dbReference>
<dbReference type="InterPro" id="IPR050265">
    <property type="entry name" value="Fe/Mn_Superoxide_Dismutase"/>
</dbReference>
<dbReference type="InterPro" id="IPR001189">
    <property type="entry name" value="Mn/Fe_SOD"/>
</dbReference>
<dbReference type="InterPro" id="IPR019833">
    <property type="entry name" value="Mn/Fe_SOD_BS"/>
</dbReference>
<dbReference type="InterPro" id="IPR019832">
    <property type="entry name" value="Mn/Fe_SOD_C"/>
</dbReference>
<dbReference type="InterPro" id="IPR019831">
    <property type="entry name" value="Mn/Fe_SOD_N"/>
</dbReference>
<dbReference type="InterPro" id="IPR036324">
    <property type="entry name" value="Mn/Fe_SOD_N_sf"/>
</dbReference>
<dbReference type="InterPro" id="IPR036314">
    <property type="entry name" value="SOD_C_sf"/>
</dbReference>
<dbReference type="InterPro" id="IPR054865">
    <property type="entry name" value="Superox_dis_Halo"/>
</dbReference>
<dbReference type="NCBIfam" id="NF041312">
    <property type="entry name" value="Superox_dis_Halo"/>
    <property type="match status" value="1"/>
</dbReference>
<dbReference type="PANTHER" id="PTHR11404">
    <property type="entry name" value="SUPEROXIDE DISMUTASE 2"/>
    <property type="match status" value="1"/>
</dbReference>
<dbReference type="PANTHER" id="PTHR11404:SF6">
    <property type="entry name" value="SUPEROXIDE DISMUTASE [MN], MITOCHONDRIAL"/>
    <property type="match status" value="1"/>
</dbReference>
<dbReference type="Pfam" id="PF02777">
    <property type="entry name" value="Sod_Fe_C"/>
    <property type="match status" value="1"/>
</dbReference>
<dbReference type="Pfam" id="PF00081">
    <property type="entry name" value="Sod_Fe_N"/>
    <property type="match status" value="1"/>
</dbReference>
<dbReference type="PIRSF" id="PIRSF000349">
    <property type="entry name" value="SODismutase"/>
    <property type="match status" value="1"/>
</dbReference>
<dbReference type="PRINTS" id="PR01703">
    <property type="entry name" value="MNSODISMTASE"/>
</dbReference>
<dbReference type="SUPFAM" id="SSF54719">
    <property type="entry name" value="Fe,Mn superoxide dismutase (SOD), C-terminal domain"/>
    <property type="match status" value="1"/>
</dbReference>
<dbReference type="SUPFAM" id="SSF46609">
    <property type="entry name" value="Fe,Mn superoxide dismutase (SOD), N-terminal domain"/>
    <property type="match status" value="1"/>
</dbReference>
<dbReference type="PROSITE" id="PS00088">
    <property type="entry name" value="SOD_MN"/>
    <property type="match status" value="1"/>
</dbReference>
<comment type="function">
    <text evidence="1">Destroys superoxide anion radicals which are normally produced within the cells and which are toxic to biological systems.</text>
</comment>
<comment type="catalytic activity">
    <reaction>
        <text>2 superoxide + 2 H(+) = H2O2 + O2</text>
        <dbReference type="Rhea" id="RHEA:20696"/>
        <dbReference type="ChEBI" id="CHEBI:15378"/>
        <dbReference type="ChEBI" id="CHEBI:15379"/>
        <dbReference type="ChEBI" id="CHEBI:16240"/>
        <dbReference type="ChEBI" id="CHEBI:18421"/>
        <dbReference type="EC" id="1.15.1.1"/>
    </reaction>
</comment>
<comment type="cofactor">
    <cofactor evidence="1">
        <name>Mn(2+)</name>
        <dbReference type="ChEBI" id="CHEBI:29035"/>
    </cofactor>
    <text evidence="1">Binds 1 Mn(2+) ion per subunit.</text>
</comment>
<comment type="similarity">
    <text evidence="2">Belongs to the iron/manganese superoxide dismutase family.</text>
</comment>